<organism>
    <name type="scientific">Schizosaccharomyces pombe (strain 972 / ATCC 24843)</name>
    <name type="common">Fission yeast</name>
    <dbReference type="NCBI Taxonomy" id="284812"/>
    <lineage>
        <taxon>Eukaryota</taxon>
        <taxon>Fungi</taxon>
        <taxon>Dikarya</taxon>
        <taxon>Ascomycota</taxon>
        <taxon>Taphrinomycotina</taxon>
        <taxon>Schizosaccharomycetes</taxon>
        <taxon>Schizosaccharomycetales</taxon>
        <taxon>Schizosaccharomycetaceae</taxon>
        <taxon>Schizosaccharomyces</taxon>
    </lineage>
</organism>
<comment type="function">
    <text evidence="1">Substrate-binding subunit of tRNA (adenine-N(1)-)-methyltransferase, which catalyzes the formation of N(1)-methyladenine at position 58 (m1A58) in initiator methionyl-tRNA.</text>
</comment>
<comment type="subunit">
    <text evidence="1">Heterotetramer; composed of two copies of TRM6 and two copies of TRM61.</text>
</comment>
<comment type="subcellular location">
    <subcellularLocation>
        <location evidence="3">Nucleus</location>
    </subcellularLocation>
</comment>
<comment type="similarity">
    <text evidence="4">Belongs to the TRM6/GCD10 family.</text>
</comment>
<protein>
    <recommendedName>
        <fullName>tRNA (adenine(58)-N(1))-methyltransferase non-catalytic subunit trm6</fullName>
    </recommendedName>
    <alternativeName>
        <fullName>General control non-derepressible protein 10</fullName>
        <shortName>Protein gcd10</shortName>
    </alternativeName>
    <alternativeName>
        <fullName>tRNA(m1A58)-methyltransferase subunit trm6</fullName>
        <shortName>tRNA(m1A58)MTase subunit trm6</shortName>
    </alternativeName>
</protein>
<feature type="chain" id="PRO_0000256165" description="tRNA (adenine(58)-N(1))-methyltransferase non-catalytic subunit trm6">
    <location>
        <begin position="1"/>
        <end position="462"/>
    </location>
</feature>
<feature type="region of interest" description="Disordered" evidence="2">
    <location>
        <begin position="442"/>
        <end position="462"/>
    </location>
</feature>
<feature type="compositionally biased region" description="Basic and acidic residues" evidence="2">
    <location>
        <begin position="449"/>
        <end position="462"/>
    </location>
</feature>
<accession>Q9HGL4</accession>
<proteinExistence type="inferred from homology"/>
<dbReference type="EMBL" id="CU329671">
    <property type="protein sequence ID" value="CAC01523.1"/>
    <property type="molecule type" value="Genomic_DNA"/>
</dbReference>
<dbReference type="RefSeq" id="NP_595109.1">
    <property type="nucleotide sequence ID" value="NM_001021016.2"/>
</dbReference>
<dbReference type="SMR" id="Q9HGL4"/>
<dbReference type="BioGRID" id="277223">
    <property type="interactions" value="54"/>
</dbReference>
<dbReference type="FunCoup" id="Q9HGL4">
    <property type="interactions" value="574"/>
</dbReference>
<dbReference type="STRING" id="284812.Q9HGL4"/>
<dbReference type="iPTMnet" id="Q9HGL4"/>
<dbReference type="PaxDb" id="4896-SPBC800.08.1"/>
<dbReference type="EnsemblFungi" id="SPBC800.08.1">
    <property type="protein sequence ID" value="SPBC800.08.1:pep"/>
    <property type="gene ID" value="SPBC800.08"/>
</dbReference>
<dbReference type="GeneID" id="2540699"/>
<dbReference type="KEGG" id="spo:2540699"/>
<dbReference type="PomBase" id="SPBC800.08">
    <property type="gene designation" value="gcd10"/>
</dbReference>
<dbReference type="VEuPathDB" id="FungiDB:SPBC800.08"/>
<dbReference type="eggNOG" id="KOG1416">
    <property type="taxonomic scope" value="Eukaryota"/>
</dbReference>
<dbReference type="HOGENOM" id="CLU_010916_0_3_1"/>
<dbReference type="InParanoid" id="Q9HGL4"/>
<dbReference type="OMA" id="TRCRPYQ"/>
<dbReference type="PhylomeDB" id="Q9HGL4"/>
<dbReference type="PRO" id="PR:Q9HGL4"/>
<dbReference type="Proteomes" id="UP000002485">
    <property type="component" value="Chromosome II"/>
</dbReference>
<dbReference type="GO" id="GO:0005634">
    <property type="term" value="C:nucleus"/>
    <property type="evidence" value="ECO:0007005"/>
    <property type="project" value="PomBase"/>
</dbReference>
<dbReference type="GO" id="GO:0031515">
    <property type="term" value="C:tRNA (m1A) methyltransferase complex"/>
    <property type="evidence" value="ECO:0000318"/>
    <property type="project" value="GO_Central"/>
</dbReference>
<dbReference type="GO" id="GO:0000049">
    <property type="term" value="F:tRNA binding"/>
    <property type="evidence" value="ECO:0000266"/>
    <property type="project" value="PomBase"/>
</dbReference>
<dbReference type="GO" id="GO:0030488">
    <property type="term" value="P:tRNA methylation"/>
    <property type="evidence" value="ECO:0000314"/>
    <property type="project" value="PomBase"/>
</dbReference>
<dbReference type="InterPro" id="IPR017423">
    <property type="entry name" value="TRM6"/>
</dbReference>
<dbReference type="PANTHER" id="PTHR12945">
    <property type="entry name" value="TRANSLATION INITIATION FACTOR EIF3-RELATED"/>
    <property type="match status" value="1"/>
</dbReference>
<dbReference type="PANTHER" id="PTHR12945:SF0">
    <property type="entry name" value="TRNA (ADENINE(58)-N(1))-METHYLTRANSFERASE NON-CATALYTIC SUBUNIT TRM6"/>
    <property type="match status" value="1"/>
</dbReference>
<dbReference type="Pfam" id="PF04189">
    <property type="entry name" value="Gcd10p"/>
    <property type="match status" value="1"/>
</dbReference>
<dbReference type="PIRSF" id="PIRSF038170">
    <property type="entry name" value="tRNA_m1A_mtfrase"/>
    <property type="match status" value="1"/>
</dbReference>
<name>TRM6_SCHPO</name>
<sequence>MLRHASTISENSSVFIKLPSDNVRFVTLKPNNTIHLGKFGSFLADDLFGKHFDETFEIYQPKKIRVLKTREVQYIEEEKKTNQELNDCRGNQLMTQEEIDELRANIKAGGLRAEEAIKQLTNSSKTFEQKTLFAQEKYVTRKGEKYLQRFQVLRPCVEVVANYMIEHDPYKILDLTAECISLMLTLGNVKPGGRYLVVDETGCMFLGSLIDRVAGDCKITLVHPNEQPNSSCLEYWGQDFKEDSLVQKGILKTLNWYQVTNPTETLSEYSVEDIPESELNEMKLRHRKRYETKKATFNRLKNTIDDFESGNYDALFILSIHTPMSVLQHLLPKLGISRPFMVYSTYQQVLVETYHQLSKWDNLFVEKTAQSTENDEKVDQGDVAIDTQKEKVIMLDIHEIRTRPYQVLPERTHPFMTVRGDMGFVLSGIKVLTSDSNLAAGRFPKRKGQKETSSVKKAKLEN</sequence>
<evidence type="ECO:0000250" key="1">
    <source>
        <dbReference type="UniProtKB" id="P41814"/>
    </source>
</evidence>
<evidence type="ECO:0000256" key="2">
    <source>
        <dbReference type="SAM" id="MobiDB-lite"/>
    </source>
</evidence>
<evidence type="ECO:0000269" key="3">
    <source>
    </source>
</evidence>
<evidence type="ECO:0000305" key="4"/>
<gene>
    <name type="primary">gcd10</name>
    <name type="synonym">trm6</name>
    <name type="ORF">SPBC800.08</name>
</gene>
<keyword id="KW-0539">Nucleus</keyword>
<keyword id="KW-1185">Reference proteome</keyword>
<keyword id="KW-0694">RNA-binding</keyword>
<keyword id="KW-0819">tRNA processing</keyword>
<reference key="1">
    <citation type="journal article" date="2002" name="Nature">
        <title>The genome sequence of Schizosaccharomyces pombe.</title>
        <authorList>
            <person name="Wood V."/>
            <person name="Gwilliam R."/>
            <person name="Rajandream M.A."/>
            <person name="Lyne M.H."/>
            <person name="Lyne R."/>
            <person name="Stewart A."/>
            <person name="Sgouros J.G."/>
            <person name="Peat N."/>
            <person name="Hayles J."/>
            <person name="Baker S.G."/>
            <person name="Basham D."/>
            <person name="Bowman S."/>
            <person name="Brooks K."/>
            <person name="Brown D."/>
            <person name="Brown S."/>
            <person name="Chillingworth T."/>
            <person name="Churcher C.M."/>
            <person name="Collins M."/>
            <person name="Connor R."/>
            <person name="Cronin A."/>
            <person name="Davis P."/>
            <person name="Feltwell T."/>
            <person name="Fraser A."/>
            <person name="Gentles S."/>
            <person name="Goble A."/>
            <person name="Hamlin N."/>
            <person name="Harris D.E."/>
            <person name="Hidalgo J."/>
            <person name="Hodgson G."/>
            <person name="Holroyd S."/>
            <person name="Hornsby T."/>
            <person name="Howarth S."/>
            <person name="Huckle E.J."/>
            <person name="Hunt S."/>
            <person name="Jagels K."/>
            <person name="James K.D."/>
            <person name="Jones L."/>
            <person name="Jones M."/>
            <person name="Leather S."/>
            <person name="McDonald S."/>
            <person name="McLean J."/>
            <person name="Mooney P."/>
            <person name="Moule S."/>
            <person name="Mungall K.L."/>
            <person name="Murphy L.D."/>
            <person name="Niblett D."/>
            <person name="Odell C."/>
            <person name="Oliver K."/>
            <person name="O'Neil S."/>
            <person name="Pearson D."/>
            <person name="Quail M.A."/>
            <person name="Rabbinowitsch E."/>
            <person name="Rutherford K.M."/>
            <person name="Rutter S."/>
            <person name="Saunders D."/>
            <person name="Seeger K."/>
            <person name="Sharp S."/>
            <person name="Skelton J."/>
            <person name="Simmonds M.N."/>
            <person name="Squares R."/>
            <person name="Squares S."/>
            <person name="Stevens K."/>
            <person name="Taylor K."/>
            <person name="Taylor R.G."/>
            <person name="Tivey A."/>
            <person name="Walsh S.V."/>
            <person name="Warren T."/>
            <person name="Whitehead S."/>
            <person name="Woodward J.R."/>
            <person name="Volckaert G."/>
            <person name="Aert R."/>
            <person name="Robben J."/>
            <person name="Grymonprez B."/>
            <person name="Weltjens I."/>
            <person name="Vanstreels E."/>
            <person name="Rieger M."/>
            <person name="Schaefer M."/>
            <person name="Mueller-Auer S."/>
            <person name="Gabel C."/>
            <person name="Fuchs M."/>
            <person name="Duesterhoeft A."/>
            <person name="Fritzc C."/>
            <person name="Holzer E."/>
            <person name="Moestl D."/>
            <person name="Hilbert H."/>
            <person name="Borzym K."/>
            <person name="Langer I."/>
            <person name="Beck A."/>
            <person name="Lehrach H."/>
            <person name="Reinhardt R."/>
            <person name="Pohl T.M."/>
            <person name="Eger P."/>
            <person name="Zimmermann W."/>
            <person name="Wedler H."/>
            <person name="Wambutt R."/>
            <person name="Purnelle B."/>
            <person name="Goffeau A."/>
            <person name="Cadieu E."/>
            <person name="Dreano S."/>
            <person name="Gloux S."/>
            <person name="Lelaure V."/>
            <person name="Mottier S."/>
            <person name="Galibert F."/>
            <person name="Aves S.J."/>
            <person name="Xiang Z."/>
            <person name="Hunt C."/>
            <person name="Moore K."/>
            <person name="Hurst S.M."/>
            <person name="Lucas M."/>
            <person name="Rochet M."/>
            <person name="Gaillardin C."/>
            <person name="Tallada V.A."/>
            <person name="Garzon A."/>
            <person name="Thode G."/>
            <person name="Daga R.R."/>
            <person name="Cruzado L."/>
            <person name="Jimenez J."/>
            <person name="Sanchez M."/>
            <person name="del Rey F."/>
            <person name="Benito J."/>
            <person name="Dominguez A."/>
            <person name="Revuelta J.L."/>
            <person name="Moreno S."/>
            <person name="Armstrong J."/>
            <person name="Forsburg S.L."/>
            <person name="Cerutti L."/>
            <person name="Lowe T."/>
            <person name="McCombie W.R."/>
            <person name="Paulsen I."/>
            <person name="Potashkin J."/>
            <person name="Shpakovski G.V."/>
            <person name="Ussery D."/>
            <person name="Barrell B.G."/>
            <person name="Nurse P."/>
        </authorList>
    </citation>
    <scope>NUCLEOTIDE SEQUENCE [LARGE SCALE GENOMIC DNA]</scope>
    <source>
        <strain>972 / ATCC 24843</strain>
    </source>
</reference>
<reference key="2">
    <citation type="journal article" date="2006" name="Nat. Biotechnol.">
        <title>ORFeome cloning and global analysis of protein localization in the fission yeast Schizosaccharomyces pombe.</title>
        <authorList>
            <person name="Matsuyama A."/>
            <person name="Arai R."/>
            <person name="Yashiroda Y."/>
            <person name="Shirai A."/>
            <person name="Kamata A."/>
            <person name="Sekido S."/>
            <person name="Kobayashi Y."/>
            <person name="Hashimoto A."/>
            <person name="Hamamoto M."/>
            <person name="Hiraoka Y."/>
            <person name="Horinouchi S."/>
            <person name="Yoshida M."/>
        </authorList>
    </citation>
    <scope>SUBCELLULAR LOCATION [LARGE SCALE ANALYSIS]</scope>
</reference>